<name>EX7S_CLOPE</name>
<comment type="function">
    <text evidence="1">Bidirectionally degrades single-stranded DNA into large acid-insoluble oligonucleotides, which are then degraded further into small acid-soluble oligonucleotides.</text>
</comment>
<comment type="catalytic activity">
    <reaction evidence="1">
        <text>Exonucleolytic cleavage in either 5'- to 3'- or 3'- to 5'-direction to yield nucleoside 5'-phosphates.</text>
        <dbReference type="EC" id="3.1.11.6"/>
    </reaction>
</comment>
<comment type="subunit">
    <text evidence="1">Heterooligomer composed of large and small subunits.</text>
</comment>
<comment type="subcellular location">
    <subcellularLocation>
        <location evidence="1">Cytoplasm</location>
    </subcellularLocation>
</comment>
<comment type="similarity">
    <text evidence="1 2">Belongs to the XseB family.</text>
</comment>
<dbReference type="EC" id="3.1.11.6" evidence="1"/>
<dbReference type="EMBL" id="BA000016">
    <property type="protein sequence ID" value="BAB81527.1"/>
    <property type="molecule type" value="Genomic_DNA"/>
</dbReference>
<dbReference type="RefSeq" id="WP_003451121.1">
    <property type="nucleotide sequence ID" value="NC_003366.1"/>
</dbReference>
<dbReference type="SMR" id="Q8XJD9"/>
<dbReference type="STRING" id="195102.gene:10491085"/>
<dbReference type="KEGG" id="cpe:CPE1821"/>
<dbReference type="HOGENOM" id="CLU_145918_3_2_9"/>
<dbReference type="Proteomes" id="UP000000818">
    <property type="component" value="Chromosome"/>
</dbReference>
<dbReference type="GO" id="GO:0005829">
    <property type="term" value="C:cytosol"/>
    <property type="evidence" value="ECO:0007669"/>
    <property type="project" value="TreeGrafter"/>
</dbReference>
<dbReference type="GO" id="GO:0009318">
    <property type="term" value="C:exodeoxyribonuclease VII complex"/>
    <property type="evidence" value="ECO:0007669"/>
    <property type="project" value="InterPro"/>
</dbReference>
<dbReference type="GO" id="GO:0008855">
    <property type="term" value="F:exodeoxyribonuclease VII activity"/>
    <property type="evidence" value="ECO:0007669"/>
    <property type="project" value="UniProtKB-UniRule"/>
</dbReference>
<dbReference type="GO" id="GO:0006308">
    <property type="term" value="P:DNA catabolic process"/>
    <property type="evidence" value="ECO:0007669"/>
    <property type="project" value="UniProtKB-UniRule"/>
</dbReference>
<dbReference type="Gene3D" id="1.10.287.1040">
    <property type="entry name" value="Exonuclease VII, small subunit"/>
    <property type="match status" value="1"/>
</dbReference>
<dbReference type="HAMAP" id="MF_00337">
    <property type="entry name" value="Exonuc_7_S"/>
    <property type="match status" value="1"/>
</dbReference>
<dbReference type="InterPro" id="IPR003761">
    <property type="entry name" value="Exonuc_VII_S"/>
</dbReference>
<dbReference type="InterPro" id="IPR037004">
    <property type="entry name" value="Exonuc_VII_ssu_sf"/>
</dbReference>
<dbReference type="NCBIfam" id="NF002140">
    <property type="entry name" value="PRK00977.1-4"/>
    <property type="match status" value="1"/>
</dbReference>
<dbReference type="NCBIfam" id="TIGR01280">
    <property type="entry name" value="xseB"/>
    <property type="match status" value="1"/>
</dbReference>
<dbReference type="PANTHER" id="PTHR34137">
    <property type="entry name" value="EXODEOXYRIBONUCLEASE 7 SMALL SUBUNIT"/>
    <property type="match status" value="1"/>
</dbReference>
<dbReference type="PANTHER" id="PTHR34137:SF1">
    <property type="entry name" value="EXODEOXYRIBONUCLEASE 7 SMALL SUBUNIT"/>
    <property type="match status" value="1"/>
</dbReference>
<dbReference type="Pfam" id="PF02609">
    <property type="entry name" value="Exonuc_VII_S"/>
    <property type="match status" value="1"/>
</dbReference>
<dbReference type="PIRSF" id="PIRSF006488">
    <property type="entry name" value="Exonuc_VII_S"/>
    <property type="match status" value="1"/>
</dbReference>
<dbReference type="SUPFAM" id="SSF116842">
    <property type="entry name" value="XseB-like"/>
    <property type="match status" value="1"/>
</dbReference>
<proteinExistence type="inferred from homology"/>
<accession>Q8XJD9</accession>
<reference key="1">
    <citation type="journal article" date="2002" name="Proc. Natl. Acad. Sci. U.S.A.">
        <title>Complete genome sequence of Clostridium perfringens, an anaerobic flesh-eater.</title>
        <authorList>
            <person name="Shimizu T."/>
            <person name="Ohtani K."/>
            <person name="Hirakawa H."/>
            <person name="Ohshima K."/>
            <person name="Yamashita A."/>
            <person name="Shiba T."/>
            <person name="Ogasawara N."/>
            <person name="Hattori M."/>
            <person name="Kuhara S."/>
            <person name="Hayashi H."/>
        </authorList>
    </citation>
    <scope>NUCLEOTIDE SEQUENCE [LARGE SCALE GENOMIC DNA]</scope>
    <source>
        <strain>13 / Type A</strain>
    </source>
</reference>
<feature type="chain" id="PRO_0000206940" description="Exodeoxyribonuclease 7 small subunit">
    <location>
        <begin position="1"/>
        <end position="75"/>
    </location>
</feature>
<sequence>MARKETNYESMVSELNEIVKQLENGDLTLEESIKSYENGVKIVNKLYKKLSTLEGKIKVVEDEKEEDFGGYSNEY</sequence>
<keyword id="KW-0963">Cytoplasm</keyword>
<keyword id="KW-0269">Exonuclease</keyword>
<keyword id="KW-0378">Hydrolase</keyword>
<keyword id="KW-0540">Nuclease</keyword>
<keyword id="KW-1185">Reference proteome</keyword>
<evidence type="ECO:0000255" key="1">
    <source>
        <dbReference type="HAMAP-Rule" id="MF_00337"/>
    </source>
</evidence>
<evidence type="ECO:0000305" key="2"/>
<gene>
    <name evidence="1" type="primary">xseB</name>
    <name type="ordered locus">CPE1821</name>
</gene>
<organism>
    <name type="scientific">Clostridium perfringens (strain 13 / Type A)</name>
    <dbReference type="NCBI Taxonomy" id="195102"/>
    <lineage>
        <taxon>Bacteria</taxon>
        <taxon>Bacillati</taxon>
        <taxon>Bacillota</taxon>
        <taxon>Clostridia</taxon>
        <taxon>Eubacteriales</taxon>
        <taxon>Clostridiaceae</taxon>
        <taxon>Clostridium</taxon>
    </lineage>
</organism>
<protein>
    <recommendedName>
        <fullName evidence="1">Exodeoxyribonuclease 7 small subunit</fullName>
        <ecNumber evidence="1">3.1.11.6</ecNumber>
    </recommendedName>
    <alternativeName>
        <fullName evidence="1">Exodeoxyribonuclease VII small subunit</fullName>
        <shortName evidence="1">Exonuclease VII small subunit</shortName>
    </alternativeName>
</protein>